<sequence length="113" mass="12883">MTSEQFEYHLTGKEILEKEFKTGLRGYSPEDVDEFLDMVIKDYSTFTQEIEALQAENIRLVQELDNAPLRTSTQPAPTFQAAAQPAGTTNFDILKRLSNLEKHVFGNKLDDNE</sequence>
<protein>
    <recommendedName>
        <fullName evidence="1">Cell cycle protein GpsB</fullName>
    </recommendedName>
    <alternativeName>
        <fullName evidence="1">Guiding PBP1-shuttling protein</fullName>
    </alternativeName>
</protein>
<keyword id="KW-0131">Cell cycle</keyword>
<keyword id="KW-0132">Cell division</keyword>
<keyword id="KW-0133">Cell shape</keyword>
<keyword id="KW-0175">Coiled coil</keyword>
<keyword id="KW-0963">Cytoplasm</keyword>
<accession>B8DDL5</accession>
<dbReference type="EMBL" id="CP001175">
    <property type="protein sequence ID" value="ACK39024.1"/>
    <property type="molecule type" value="Genomic_DNA"/>
</dbReference>
<dbReference type="RefSeq" id="WP_003722998.1">
    <property type="nucleotide sequence ID" value="NC_011660.1"/>
</dbReference>
<dbReference type="SMR" id="B8DDL5"/>
<dbReference type="KEGG" id="lmh:LMHCC_0669"/>
<dbReference type="HOGENOM" id="CLU_140309_1_0_9"/>
<dbReference type="GO" id="GO:0005737">
    <property type="term" value="C:cytoplasm"/>
    <property type="evidence" value="ECO:0007669"/>
    <property type="project" value="UniProtKB-SubCell"/>
</dbReference>
<dbReference type="GO" id="GO:0051301">
    <property type="term" value="P:cell division"/>
    <property type="evidence" value="ECO:0007669"/>
    <property type="project" value="UniProtKB-UniRule"/>
</dbReference>
<dbReference type="GO" id="GO:0008360">
    <property type="term" value="P:regulation of cell shape"/>
    <property type="evidence" value="ECO:0007669"/>
    <property type="project" value="UniProtKB-UniRule"/>
</dbReference>
<dbReference type="Gene3D" id="6.10.250.660">
    <property type="match status" value="1"/>
</dbReference>
<dbReference type="HAMAP" id="MF_02011">
    <property type="entry name" value="GpsB"/>
    <property type="match status" value="1"/>
</dbReference>
<dbReference type="InterPro" id="IPR011229">
    <property type="entry name" value="Cell_cycle_GpsB"/>
</dbReference>
<dbReference type="InterPro" id="IPR019933">
    <property type="entry name" value="DivIVA_domain"/>
</dbReference>
<dbReference type="InterPro" id="IPR007793">
    <property type="entry name" value="DivIVA_fam"/>
</dbReference>
<dbReference type="NCBIfam" id="TIGR03544">
    <property type="entry name" value="DivI1A_domain"/>
    <property type="match status" value="1"/>
</dbReference>
<dbReference type="NCBIfam" id="NF010725">
    <property type="entry name" value="PRK14127.1"/>
    <property type="match status" value="1"/>
</dbReference>
<dbReference type="PANTHER" id="PTHR35794:SF1">
    <property type="entry name" value="CELL CYCLE PROTEIN GPSB"/>
    <property type="match status" value="1"/>
</dbReference>
<dbReference type="PANTHER" id="PTHR35794">
    <property type="entry name" value="CELL DIVISION PROTEIN DIVIVA"/>
    <property type="match status" value="1"/>
</dbReference>
<dbReference type="Pfam" id="PF05103">
    <property type="entry name" value="DivIVA"/>
    <property type="match status" value="1"/>
</dbReference>
<dbReference type="PIRSF" id="PIRSF029938">
    <property type="entry name" value="UCP029938"/>
    <property type="match status" value="1"/>
</dbReference>
<gene>
    <name evidence="1" type="primary">gpsB</name>
    <name type="ordered locus">LMHCC_0669</name>
</gene>
<name>GPSB_LISMH</name>
<reference key="1">
    <citation type="journal article" date="2011" name="J. Bacteriol.">
        <title>Genome sequence of lineage III Listeria monocytogenes strain HCC23.</title>
        <authorList>
            <person name="Steele C.L."/>
            <person name="Donaldson J.R."/>
            <person name="Paul D."/>
            <person name="Banes M.M."/>
            <person name="Arick T."/>
            <person name="Bridges S.M."/>
            <person name="Lawrence M.L."/>
        </authorList>
    </citation>
    <scope>NUCLEOTIDE SEQUENCE [LARGE SCALE GENOMIC DNA]</scope>
    <source>
        <strain>HCC23</strain>
    </source>
</reference>
<organism>
    <name type="scientific">Listeria monocytogenes serotype 4a (strain HCC23)</name>
    <dbReference type="NCBI Taxonomy" id="552536"/>
    <lineage>
        <taxon>Bacteria</taxon>
        <taxon>Bacillati</taxon>
        <taxon>Bacillota</taxon>
        <taxon>Bacilli</taxon>
        <taxon>Bacillales</taxon>
        <taxon>Listeriaceae</taxon>
        <taxon>Listeria</taxon>
    </lineage>
</organism>
<comment type="function">
    <text evidence="1">Divisome component that associates with the complex late in its assembly, after the Z-ring is formed, and is dependent on DivIC and PBP2B for its recruitment to the divisome. Together with EzrA, is a key component of the system that regulates PBP1 localization during cell cycle progression. Its main role could be the removal of PBP1 from the cell pole after pole maturation is completed. Also contributes to the recruitment of PBP1 to the division complex. Not essential for septum formation.</text>
</comment>
<comment type="subunit">
    <text evidence="1">Forms polymers through the coiled coil domains. Interacts with PBP1, MreC and EzrA.</text>
</comment>
<comment type="subcellular location">
    <subcellularLocation>
        <location evidence="1">Cytoplasm</location>
    </subcellularLocation>
    <text evidence="1">Shuttles between the lateral wall and the division site in a cell cycle-dependent manner.</text>
</comment>
<comment type="similarity">
    <text evidence="1">Belongs to the GpsB family.</text>
</comment>
<feature type="chain" id="PRO_1000189496" description="Cell cycle protein GpsB">
    <location>
        <begin position="1"/>
        <end position="113"/>
    </location>
</feature>
<feature type="coiled-coil region" evidence="1">
    <location>
        <begin position="36"/>
        <end position="68"/>
    </location>
</feature>
<proteinExistence type="inferred from homology"/>
<evidence type="ECO:0000255" key="1">
    <source>
        <dbReference type="HAMAP-Rule" id="MF_02011"/>
    </source>
</evidence>